<keyword id="KW-0067">ATP-binding</keyword>
<keyword id="KW-0143">Chaperone</keyword>
<keyword id="KW-0963">Cytoplasm</keyword>
<keyword id="KW-0547">Nucleotide-binding</keyword>
<keyword id="KW-1185">Reference proteome</keyword>
<protein>
    <recommendedName>
        <fullName>Heat shock 70 kDa protein 14-A</fullName>
    </recommendedName>
</protein>
<accession>A5D8N7</accession>
<name>HS7EA_XENLA</name>
<feature type="chain" id="PRO_0000405828" description="Heat shock 70 kDa protein 14-A">
    <location>
        <begin position="1"/>
        <end position="509"/>
    </location>
</feature>
<gene>
    <name type="primary">hspa14-a</name>
</gene>
<sequence length="509" mass="54448">MAAIGVHLGCTCACVAVYKDGRADVVANDAGDRVTPAVVGFLEKEVIVGLAAKQSRVRNAANTIVKVKQILGRSYADPHAQKHISENKCIVVEKGGKPKYEIDTGEIQKLVSSEDVAKLIFSKMKETAQSALGSDVNDVVITVPFDFGESQKKALGEAALAAGFNILRMIHEPSAALLAYGIGQESPTGKSNVLVYKLGGTSLSVTMIEVNSGIYRVLATSTYDGIGGVCFTEALAQHLASEFQRTYKQDIRGNARAMMKLMNSADVAKHALSTLGSANCFVDSLYDGIDFDCSVSRARFELICSSLFNQCIDPIEKLLEQVGCKATDVNQVVLCGGSARIPKLQLLIKDLFPEVEMLSSIPPDEVIPVGAAIQAGILLGKENLSTDLDTITIECLASDILVKETDESGNNKFTVLLPSGTPLPARRQHVLQAPGNISSVCLELYESVGKSTVSEECKFAQIVLKDLQKKASGVHDILTVLTMKRDGSLHITCTDKDSGKSEMITVETS</sequence>
<proteinExistence type="evidence at transcript level"/>
<dbReference type="EMBL" id="BC141751">
    <property type="protein sequence ID" value="AAI41752.1"/>
    <property type="molecule type" value="mRNA"/>
</dbReference>
<dbReference type="RefSeq" id="NP_001092168.1">
    <property type="nucleotide sequence ID" value="NM_001098698.1"/>
</dbReference>
<dbReference type="SMR" id="A5D8N7"/>
<dbReference type="DNASU" id="100049759"/>
<dbReference type="GeneID" id="100049759"/>
<dbReference type="KEGG" id="xla:100049759"/>
<dbReference type="AGR" id="Xenbase:XB-GENE-5932920"/>
<dbReference type="CTD" id="100049759"/>
<dbReference type="Xenbase" id="XB-GENE-5932920">
    <property type="gene designation" value="hspa14.L"/>
</dbReference>
<dbReference type="OMA" id="GSTCACA"/>
<dbReference type="OrthoDB" id="29851at2759"/>
<dbReference type="Proteomes" id="UP000186698">
    <property type="component" value="Chromosome 3L"/>
</dbReference>
<dbReference type="Bgee" id="100049759">
    <property type="expression patterns" value="Expressed in neurula embryo and 19 other cell types or tissues"/>
</dbReference>
<dbReference type="GO" id="GO:0005737">
    <property type="term" value="C:cytoplasm"/>
    <property type="evidence" value="ECO:0000318"/>
    <property type="project" value="GO_Central"/>
</dbReference>
<dbReference type="GO" id="GO:0005829">
    <property type="term" value="C:cytosol"/>
    <property type="evidence" value="ECO:0000250"/>
    <property type="project" value="UniProtKB"/>
</dbReference>
<dbReference type="GO" id="GO:0005634">
    <property type="term" value="C:nucleus"/>
    <property type="evidence" value="ECO:0000318"/>
    <property type="project" value="GO_Central"/>
</dbReference>
<dbReference type="GO" id="GO:0005886">
    <property type="term" value="C:plasma membrane"/>
    <property type="evidence" value="ECO:0000318"/>
    <property type="project" value="GO_Central"/>
</dbReference>
<dbReference type="GO" id="GO:0005524">
    <property type="term" value="F:ATP binding"/>
    <property type="evidence" value="ECO:0007669"/>
    <property type="project" value="UniProtKB-KW"/>
</dbReference>
<dbReference type="GO" id="GO:0016887">
    <property type="term" value="F:ATP hydrolysis activity"/>
    <property type="evidence" value="ECO:0000318"/>
    <property type="project" value="GO_Central"/>
</dbReference>
<dbReference type="GO" id="GO:0140662">
    <property type="term" value="F:ATP-dependent protein folding chaperone"/>
    <property type="evidence" value="ECO:0007669"/>
    <property type="project" value="InterPro"/>
</dbReference>
<dbReference type="GO" id="GO:0031072">
    <property type="term" value="F:heat shock protein binding"/>
    <property type="evidence" value="ECO:0000318"/>
    <property type="project" value="GO_Central"/>
</dbReference>
<dbReference type="GO" id="GO:0044183">
    <property type="term" value="F:protein folding chaperone"/>
    <property type="evidence" value="ECO:0000318"/>
    <property type="project" value="GO_Central"/>
</dbReference>
<dbReference type="GO" id="GO:0051085">
    <property type="term" value="P:chaperone cofactor-dependent protein refolding"/>
    <property type="evidence" value="ECO:0000318"/>
    <property type="project" value="GO_Central"/>
</dbReference>
<dbReference type="GO" id="GO:0042026">
    <property type="term" value="P:protein refolding"/>
    <property type="evidence" value="ECO:0000318"/>
    <property type="project" value="GO_Central"/>
</dbReference>
<dbReference type="CDD" id="cd10238">
    <property type="entry name" value="ASKHA_NBD_HSP70_HSPA14"/>
    <property type="match status" value="1"/>
</dbReference>
<dbReference type="FunFam" id="2.60.34.10:FF:000013">
    <property type="entry name" value="Heat shock 70 kDa protein 14"/>
    <property type="match status" value="1"/>
</dbReference>
<dbReference type="FunFam" id="3.30.30.30:FF:000008">
    <property type="entry name" value="heat shock 70 kDa protein 14"/>
    <property type="match status" value="1"/>
</dbReference>
<dbReference type="FunFam" id="3.90.640.10:FF:000010">
    <property type="entry name" value="heat shock 70 kDa protein 14"/>
    <property type="match status" value="1"/>
</dbReference>
<dbReference type="FunFam" id="3.30.420.40:FF:000171">
    <property type="entry name" value="Heat shock 70 kDa protein 4"/>
    <property type="match status" value="1"/>
</dbReference>
<dbReference type="FunFam" id="3.30.420.40:FF:000433">
    <property type="entry name" value="Heat shock protein family A (Hsp70) member 14"/>
    <property type="match status" value="1"/>
</dbReference>
<dbReference type="Gene3D" id="3.30.30.30">
    <property type="match status" value="1"/>
</dbReference>
<dbReference type="Gene3D" id="3.30.420.40">
    <property type="match status" value="2"/>
</dbReference>
<dbReference type="Gene3D" id="3.90.640.10">
    <property type="entry name" value="Actin, Chain A, domain 4"/>
    <property type="match status" value="1"/>
</dbReference>
<dbReference type="Gene3D" id="2.60.34.10">
    <property type="entry name" value="Substrate Binding Domain Of DNAk, Chain A, domain 1"/>
    <property type="match status" value="1"/>
</dbReference>
<dbReference type="InterPro" id="IPR043129">
    <property type="entry name" value="ATPase_NBD"/>
</dbReference>
<dbReference type="InterPro" id="IPR029047">
    <property type="entry name" value="HSP70_peptide-bd_sf"/>
</dbReference>
<dbReference type="InterPro" id="IPR013126">
    <property type="entry name" value="Hsp_70_fam"/>
</dbReference>
<dbReference type="InterPro" id="IPR042049">
    <property type="entry name" value="HSPA14_NBD"/>
</dbReference>
<dbReference type="PANTHER" id="PTHR19375">
    <property type="entry name" value="HEAT SHOCK PROTEIN 70KDA"/>
    <property type="match status" value="1"/>
</dbReference>
<dbReference type="Pfam" id="PF00012">
    <property type="entry name" value="HSP70"/>
    <property type="match status" value="1"/>
</dbReference>
<dbReference type="PRINTS" id="PR00301">
    <property type="entry name" value="HEATSHOCK70"/>
</dbReference>
<dbReference type="SUPFAM" id="SSF53067">
    <property type="entry name" value="Actin-like ATPase domain"/>
    <property type="match status" value="2"/>
</dbReference>
<dbReference type="SUPFAM" id="SSF100920">
    <property type="entry name" value="Heat shock protein 70kD (HSP70), peptide-binding domain"/>
    <property type="match status" value="1"/>
</dbReference>
<organism>
    <name type="scientific">Xenopus laevis</name>
    <name type="common">African clawed frog</name>
    <dbReference type="NCBI Taxonomy" id="8355"/>
    <lineage>
        <taxon>Eukaryota</taxon>
        <taxon>Metazoa</taxon>
        <taxon>Chordata</taxon>
        <taxon>Craniata</taxon>
        <taxon>Vertebrata</taxon>
        <taxon>Euteleostomi</taxon>
        <taxon>Amphibia</taxon>
        <taxon>Batrachia</taxon>
        <taxon>Anura</taxon>
        <taxon>Pipoidea</taxon>
        <taxon>Pipidae</taxon>
        <taxon>Xenopodinae</taxon>
        <taxon>Xenopus</taxon>
        <taxon>Xenopus</taxon>
    </lineage>
</organism>
<comment type="function">
    <text evidence="1">Component of the ribosome-associated complex (RAC), a complex involved in folding or maintaining nascent polypeptides in a folding-competent state.</text>
</comment>
<comment type="subunit">
    <text evidence="1">Component of ribosome-associated complex (RAC).</text>
</comment>
<comment type="subcellular location">
    <subcellularLocation>
        <location evidence="1">Cytoplasm</location>
        <location evidence="1">Cytosol</location>
    </subcellularLocation>
</comment>
<comment type="similarity">
    <text evidence="2">Belongs to the heat shock protein 70 family.</text>
</comment>
<evidence type="ECO:0000250" key="1"/>
<evidence type="ECO:0000305" key="2"/>
<reference key="1">
    <citation type="submission" date="2007-05" db="EMBL/GenBank/DDBJ databases">
        <authorList>
            <consortium name="NIH - Xenopus Gene Collection (XGC) project"/>
        </authorList>
    </citation>
    <scope>NUCLEOTIDE SEQUENCE [LARGE SCALE MRNA]</scope>
    <source>
        <tissue>Embryo</tissue>
    </source>
</reference>